<comment type="function">
    <text evidence="1">Forms a proton-selective ion channel that is necessary for the efficient release of the viral genome during virus entry. After attaching to the cell surface, the virion enters the cell by endocytosis. Acidification of the endosome triggers M2 ion channel activity. The influx of protons into virion interior is believed to disrupt interactions between the viral ribonucleoprotein (RNP), matrix protein 1 (M1), and lipid bilayers, thereby freeing the viral genome from interaction with viral proteins and enabling RNA segments to migrate to the host cell nucleus, where influenza virus RNA transcription and replication occur. Also plays a role in viral proteins secretory pathway. Elevates the intravesicular pH of normally acidic compartments, such as trans-Golgi network, preventing newly formed hemagglutinin from premature switching to the fusion-active conformation.</text>
</comment>
<comment type="activity regulation">
    <text>The M2 protein from most influenza A strains is inhibited by amantadine and rimantadine, resulting in viral uncoating incapacity. Emergence of amantadine-resistant variants is usually rapid.</text>
</comment>
<comment type="subunit">
    <text evidence="1">Homotetramer; composed of two disulfide-linked dimers held together by non-covalent interactions. May interact with matrix protein 1.</text>
</comment>
<comment type="subcellular location">
    <subcellularLocation>
        <location evidence="1">Virion membrane</location>
    </subcellularLocation>
    <subcellularLocation>
        <location evidence="1">Host apical cell membrane</location>
        <topology evidence="1">Single-pass type III membrane protein</topology>
    </subcellularLocation>
    <text evidence="1">Abundantly expressed at the apical plasma membrane in infected polarized epithelial cells, in close proximity to budding and assembled virions. Minor component of virions (only 16-20 molecules/virion).</text>
</comment>
<comment type="alternative products">
    <event type="alternative splicing"/>
    <isoform>
        <id>Q67201-1</id>
        <name>M2</name>
        <sequence type="displayed"/>
    </isoform>
    <isoform>
        <id>Q67202-1</id>
        <name>M1</name>
        <sequence type="external"/>
    </isoform>
    <text>Only the first 9 residues are shared by the 2 isoforms.</text>
</comment>
<comment type="domain">
    <text evidence="1">Cytoplasmic tail plays an important role in virion assembly and morphogenesis.</text>
</comment>
<comment type="miscellaneous">
    <text evidence="1">When the channel is activated, one or more imidazole moieties of His-37 probably become bi-protonated.</text>
</comment>
<comment type="similarity">
    <text evidence="1">Belongs to the influenza viruses matrix protein M2 family.</text>
</comment>
<gene>
    <name evidence="1" type="primary">M</name>
</gene>
<proteinExistence type="inferred from homology"/>
<dbReference type="EMBL" id="M63525">
    <property type="protein sequence ID" value="AAA43335.1"/>
    <property type="molecule type" value="Genomic_RNA"/>
</dbReference>
<dbReference type="SMR" id="Q67201"/>
<dbReference type="GO" id="GO:0020002">
    <property type="term" value="C:host cell plasma membrane"/>
    <property type="evidence" value="ECO:0007669"/>
    <property type="project" value="UniProtKB-SubCell"/>
</dbReference>
<dbReference type="GO" id="GO:0016020">
    <property type="term" value="C:membrane"/>
    <property type="evidence" value="ECO:0007669"/>
    <property type="project" value="UniProtKB-UniRule"/>
</dbReference>
<dbReference type="GO" id="GO:0055036">
    <property type="term" value="C:virion membrane"/>
    <property type="evidence" value="ECO:0007669"/>
    <property type="project" value="UniProtKB-SubCell"/>
</dbReference>
<dbReference type="GO" id="GO:0005216">
    <property type="term" value="F:monoatomic ion channel activity"/>
    <property type="evidence" value="ECO:0007669"/>
    <property type="project" value="UniProtKB-UniRule"/>
</dbReference>
<dbReference type="GO" id="GO:0015078">
    <property type="term" value="F:proton transmembrane transporter activity"/>
    <property type="evidence" value="ECO:0007669"/>
    <property type="project" value="UniProtKB-UniRule"/>
</dbReference>
<dbReference type="GO" id="GO:0051259">
    <property type="term" value="P:protein complex oligomerization"/>
    <property type="evidence" value="ECO:0007669"/>
    <property type="project" value="UniProtKB-UniRule"/>
</dbReference>
<dbReference type="GO" id="GO:0044694">
    <property type="term" value="P:symbiont genome entry into host cell via pore formation in plasma membrane"/>
    <property type="evidence" value="ECO:0007669"/>
    <property type="project" value="UniProtKB-UniRule"/>
</dbReference>
<dbReference type="GO" id="GO:0140321">
    <property type="term" value="P:symbiont-mediated suppression of host autophagy"/>
    <property type="evidence" value="ECO:0007669"/>
    <property type="project" value="UniProtKB-KW"/>
</dbReference>
<dbReference type="Gene3D" id="6.10.250.1640">
    <property type="match status" value="1"/>
</dbReference>
<dbReference type="HAMAP" id="MF_04069">
    <property type="entry name" value="INFV_M2"/>
    <property type="match status" value="1"/>
</dbReference>
<dbReference type="InterPro" id="IPR002089">
    <property type="entry name" value="Flu_M2"/>
</dbReference>
<dbReference type="Pfam" id="PF00599">
    <property type="entry name" value="Flu_M2"/>
    <property type="match status" value="1"/>
</dbReference>
<feature type="chain" id="PRO_0000326383" description="Matrix protein 2">
    <location>
        <begin position="1"/>
        <end position="97"/>
    </location>
</feature>
<feature type="topological domain" description="Virion surface" evidence="1">
    <location>
        <begin position="1"/>
        <end position="22"/>
    </location>
</feature>
<feature type="transmembrane region" description="Helical; Signal-anchor for type III membrane protein" evidence="1">
    <location>
        <begin position="23"/>
        <end position="43"/>
    </location>
</feature>
<feature type="topological domain" description="Intravirion" evidence="1">
    <location>
        <begin position="44"/>
        <end position="97"/>
    </location>
</feature>
<feature type="region of interest" description="Disordered" evidence="2">
    <location>
        <begin position="60"/>
        <end position="83"/>
    </location>
</feature>
<feature type="site" description="Essential for channel activity, possibly by being protonated during channel activation, and by forming the channel gate and the selective filter" evidence="1">
    <location>
        <position position="37"/>
    </location>
</feature>
<feature type="site" description="Seems to be involved in pH gating" evidence="1">
    <location>
        <position position="41"/>
    </location>
</feature>
<feature type="modified residue" description="Phosphoserine; by host" evidence="1">
    <location>
        <position position="64"/>
    </location>
</feature>
<feature type="modified residue" description="Phosphoserine; by host" evidence="1">
    <location>
        <position position="82"/>
    </location>
</feature>
<feature type="lipid moiety-binding region" description="S-palmitoyl cysteine; by host" evidence="1">
    <location>
        <position position="50"/>
    </location>
</feature>
<feature type="disulfide bond" description="Interchain (with C-17)" evidence="1">
    <location>
        <position position="17"/>
    </location>
</feature>
<evidence type="ECO:0000255" key="1">
    <source>
        <dbReference type="HAMAP-Rule" id="MF_04069"/>
    </source>
</evidence>
<evidence type="ECO:0000256" key="2">
    <source>
        <dbReference type="SAM" id="MobiDB-lite"/>
    </source>
</evidence>
<accession>Q67201</accession>
<organismHost>
    <name type="scientific">Aves</name>
    <dbReference type="NCBI Taxonomy" id="8782"/>
</organismHost>
<organismHost>
    <name type="scientific">Homo sapiens</name>
    <name type="common">Human</name>
    <dbReference type="NCBI Taxonomy" id="9606"/>
</organismHost>
<organismHost>
    <name type="scientific">Sus scrofa</name>
    <name type="common">Pig</name>
    <dbReference type="NCBI Taxonomy" id="9823"/>
</organismHost>
<sequence length="97" mass="11115">MSLLTEVETPTRNGWGCRFSDSSDPLVIAASIIGILHLILWILDRLFFKCIYRLLKYGLKRGPSTEGVPESMREEYRQEQQSAVDVDDGHFVNIELE</sequence>
<name>M2_I85A4</name>
<protein>
    <recommendedName>
        <fullName evidence="1">Matrix protein 2</fullName>
    </recommendedName>
    <alternativeName>
        <fullName evidence="1">Proton channel protein M2</fullName>
    </alternativeName>
</protein>
<keyword id="KW-0025">Alternative splicing</keyword>
<keyword id="KW-1015">Disulfide bond</keyword>
<keyword id="KW-1032">Host cell membrane</keyword>
<keyword id="KW-1043">Host membrane</keyword>
<keyword id="KW-0945">Host-virus interaction</keyword>
<keyword id="KW-0375">Hydrogen ion transport</keyword>
<keyword id="KW-1083">Inhibition of host autophagy by virus</keyword>
<keyword id="KW-0407">Ion channel</keyword>
<keyword id="KW-0406">Ion transport</keyword>
<keyword id="KW-0449">Lipoprotein</keyword>
<keyword id="KW-0472">Membrane</keyword>
<keyword id="KW-0564">Palmitate</keyword>
<keyword id="KW-0597">Phosphoprotein</keyword>
<keyword id="KW-0735">Signal-anchor</keyword>
<keyword id="KW-0812">Transmembrane</keyword>
<keyword id="KW-1133">Transmembrane helix</keyword>
<keyword id="KW-0813">Transport</keyword>
<keyword id="KW-1182">Viral ion channel</keyword>
<keyword id="KW-0946">Virion</keyword>
<reference key="1">
    <citation type="journal article" date="1991" name="J. Virol.">
        <title>Evolutionary analysis of the influenza A virus M gene with comparison of the M1 and M2 proteins.</title>
        <authorList>
            <person name="Ito T."/>
            <person name="Gorman O.T."/>
            <person name="Kawaoka Y."/>
            <person name="Bean W.J."/>
            <person name="Webster R.G."/>
        </authorList>
    </citation>
    <scope>NUCLEOTIDE SEQUENCE [GENOMIC RNA]</scope>
</reference>
<organism>
    <name type="scientific">Influenza A virus (strain A/Swine/Netherlands/12/1985 H1N1)</name>
    <dbReference type="NCBI Taxonomy" id="380347"/>
    <lineage>
        <taxon>Viruses</taxon>
        <taxon>Riboviria</taxon>
        <taxon>Orthornavirae</taxon>
        <taxon>Negarnaviricota</taxon>
        <taxon>Polyploviricotina</taxon>
        <taxon>Insthoviricetes</taxon>
        <taxon>Articulavirales</taxon>
        <taxon>Orthomyxoviridae</taxon>
        <taxon>Alphainfluenzavirus</taxon>
        <taxon>Alphainfluenzavirus influenzae</taxon>
        <taxon>Influenza A virus</taxon>
    </lineage>
</organism>